<sequence length="435" mass="48143">MKIFSPIRLVLAIAALMSVFSAPAFARVEININKGNVEPLPIAITDFMSSDGIGAQVSAVIAADLQRSGLFAPVNKNAFIEKISNPDQQPRFEDWKVINAQALVTGRVTRESDGRLRAEFRLWDTFAGQQLSGQQFFTQPENWRRVAHIIADAIYERVTGEKGYFDTRVVFVSESGPKTARKRQLSIMDQDGFNVRNLTNSNDIVLTPRFSPNRQEVTYMSFEGQQPRVYLLQLETGQREVVGNFPGMTFSPRFSPDGQKVIMSLQQDGNANIYTMDLRSRTTTRLTNTAAIDTAPSYSPDGQRVAFESDRGGRQQIYVMNADGSGQQRVSFGDGSYSTPVWSPRGDLIAFTKQSGGKFSIGVMKTDGSGERILTSGFHNEGPTWAPNGRVLMFFRQNAGAGGPQLYSIDLTGYNEQLIKTPTFASDPAWSPLLD</sequence>
<proteinExistence type="inferred from homology"/>
<accession>Q8U9L4</accession>
<protein>
    <recommendedName>
        <fullName evidence="1">Tol-Pal system protein TolB</fullName>
    </recommendedName>
</protein>
<feature type="signal peptide" evidence="1">
    <location>
        <begin position="1"/>
        <end position="26"/>
    </location>
</feature>
<feature type="chain" id="PRO_0000034620" description="Tol-Pal system protein TolB" evidence="1">
    <location>
        <begin position="27"/>
        <end position="435"/>
    </location>
</feature>
<dbReference type="EMBL" id="AE007870">
    <property type="protein sequence ID" value="AAK89691.2"/>
    <property type="molecule type" value="Genomic_DNA"/>
</dbReference>
<dbReference type="PIR" id="A98271">
    <property type="entry name" value="A98271"/>
</dbReference>
<dbReference type="PIR" id="AF3013">
    <property type="entry name" value="AF3013"/>
</dbReference>
<dbReference type="RefSeq" id="NP_356906.2">
    <property type="nucleotide sequence ID" value="NC_003063.2"/>
</dbReference>
<dbReference type="RefSeq" id="WP_010973273.1">
    <property type="nucleotide sequence ID" value="NC_003063.2"/>
</dbReference>
<dbReference type="SMR" id="Q8U9L4"/>
<dbReference type="STRING" id="176299.Atu3714"/>
<dbReference type="EnsemblBacteria" id="AAK89691">
    <property type="protein sequence ID" value="AAK89691"/>
    <property type="gene ID" value="Atu3714"/>
</dbReference>
<dbReference type="GeneID" id="1135588"/>
<dbReference type="KEGG" id="atu:Atu3714"/>
<dbReference type="PATRIC" id="fig|176299.10.peg.3546"/>
<dbReference type="eggNOG" id="COG0823">
    <property type="taxonomic scope" value="Bacteria"/>
</dbReference>
<dbReference type="HOGENOM" id="CLU_047123_0_0_5"/>
<dbReference type="OrthoDB" id="9802240at2"/>
<dbReference type="PhylomeDB" id="Q8U9L4"/>
<dbReference type="BioCyc" id="AGRO:ATU3714-MONOMER"/>
<dbReference type="Proteomes" id="UP000000813">
    <property type="component" value="Chromosome linear"/>
</dbReference>
<dbReference type="GO" id="GO:0042597">
    <property type="term" value="C:periplasmic space"/>
    <property type="evidence" value="ECO:0007669"/>
    <property type="project" value="UniProtKB-SubCell"/>
</dbReference>
<dbReference type="GO" id="GO:0051301">
    <property type="term" value="P:cell division"/>
    <property type="evidence" value="ECO:0007669"/>
    <property type="project" value="UniProtKB-UniRule"/>
</dbReference>
<dbReference type="GO" id="GO:0017038">
    <property type="term" value="P:protein import"/>
    <property type="evidence" value="ECO:0007669"/>
    <property type="project" value="InterPro"/>
</dbReference>
<dbReference type="Gene3D" id="2.120.10.30">
    <property type="entry name" value="TolB, C-terminal domain"/>
    <property type="match status" value="1"/>
</dbReference>
<dbReference type="Gene3D" id="3.40.50.10070">
    <property type="entry name" value="TolB, N-terminal domain"/>
    <property type="match status" value="1"/>
</dbReference>
<dbReference type="HAMAP" id="MF_00671">
    <property type="entry name" value="TolB"/>
    <property type="match status" value="1"/>
</dbReference>
<dbReference type="InterPro" id="IPR011042">
    <property type="entry name" value="6-blade_b-propeller_TolB-like"/>
</dbReference>
<dbReference type="InterPro" id="IPR011659">
    <property type="entry name" value="PD40"/>
</dbReference>
<dbReference type="InterPro" id="IPR014167">
    <property type="entry name" value="Tol-Pal_TolB"/>
</dbReference>
<dbReference type="InterPro" id="IPR007195">
    <property type="entry name" value="TolB_N"/>
</dbReference>
<dbReference type="NCBIfam" id="TIGR02800">
    <property type="entry name" value="propeller_TolB"/>
    <property type="match status" value="1"/>
</dbReference>
<dbReference type="PANTHER" id="PTHR36842:SF1">
    <property type="entry name" value="PROTEIN TOLB"/>
    <property type="match status" value="1"/>
</dbReference>
<dbReference type="PANTHER" id="PTHR36842">
    <property type="entry name" value="PROTEIN TOLB HOMOLOG"/>
    <property type="match status" value="1"/>
</dbReference>
<dbReference type="Pfam" id="PF07676">
    <property type="entry name" value="PD40"/>
    <property type="match status" value="3"/>
</dbReference>
<dbReference type="Pfam" id="PF04052">
    <property type="entry name" value="TolB_N"/>
    <property type="match status" value="1"/>
</dbReference>
<dbReference type="SUPFAM" id="SSF52964">
    <property type="entry name" value="TolB, N-terminal domain"/>
    <property type="match status" value="1"/>
</dbReference>
<dbReference type="SUPFAM" id="SSF69304">
    <property type="entry name" value="Tricorn protease N-terminal domain"/>
    <property type="match status" value="1"/>
</dbReference>
<gene>
    <name evidence="1" type="primary">tolB</name>
    <name type="ordered locus">Atu3714</name>
    <name type="ORF">AGR_L_2244</name>
</gene>
<reference key="1">
    <citation type="journal article" date="2001" name="Science">
        <title>The genome of the natural genetic engineer Agrobacterium tumefaciens C58.</title>
        <authorList>
            <person name="Wood D.W."/>
            <person name="Setubal J.C."/>
            <person name="Kaul R."/>
            <person name="Monks D.E."/>
            <person name="Kitajima J.P."/>
            <person name="Okura V.K."/>
            <person name="Zhou Y."/>
            <person name="Chen L."/>
            <person name="Wood G.E."/>
            <person name="Almeida N.F. Jr."/>
            <person name="Woo L."/>
            <person name="Chen Y."/>
            <person name="Paulsen I.T."/>
            <person name="Eisen J.A."/>
            <person name="Karp P.D."/>
            <person name="Bovee D. Sr."/>
            <person name="Chapman P."/>
            <person name="Clendenning J."/>
            <person name="Deatherage G."/>
            <person name="Gillet W."/>
            <person name="Grant C."/>
            <person name="Kutyavin T."/>
            <person name="Levy R."/>
            <person name="Li M.-J."/>
            <person name="McClelland E."/>
            <person name="Palmieri A."/>
            <person name="Raymond C."/>
            <person name="Rouse G."/>
            <person name="Saenphimmachak C."/>
            <person name="Wu Z."/>
            <person name="Romero P."/>
            <person name="Gordon D."/>
            <person name="Zhang S."/>
            <person name="Yoo H."/>
            <person name="Tao Y."/>
            <person name="Biddle P."/>
            <person name="Jung M."/>
            <person name="Krespan W."/>
            <person name="Perry M."/>
            <person name="Gordon-Kamm B."/>
            <person name="Liao L."/>
            <person name="Kim S."/>
            <person name="Hendrick C."/>
            <person name="Zhao Z.-Y."/>
            <person name="Dolan M."/>
            <person name="Chumley F."/>
            <person name="Tingey S.V."/>
            <person name="Tomb J.-F."/>
            <person name="Gordon M.P."/>
            <person name="Olson M.V."/>
            <person name="Nester E.W."/>
        </authorList>
    </citation>
    <scope>NUCLEOTIDE SEQUENCE [LARGE SCALE GENOMIC DNA]</scope>
    <source>
        <strain>C58 / ATCC 33970</strain>
    </source>
</reference>
<reference key="2">
    <citation type="journal article" date="2001" name="Science">
        <title>Genome sequence of the plant pathogen and biotechnology agent Agrobacterium tumefaciens C58.</title>
        <authorList>
            <person name="Goodner B."/>
            <person name="Hinkle G."/>
            <person name="Gattung S."/>
            <person name="Miller N."/>
            <person name="Blanchard M."/>
            <person name="Qurollo B."/>
            <person name="Goldman B.S."/>
            <person name="Cao Y."/>
            <person name="Askenazi M."/>
            <person name="Halling C."/>
            <person name="Mullin L."/>
            <person name="Houmiel K."/>
            <person name="Gordon J."/>
            <person name="Vaudin M."/>
            <person name="Iartchouk O."/>
            <person name="Epp A."/>
            <person name="Liu F."/>
            <person name="Wollam C."/>
            <person name="Allinger M."/>
            <person name="Doughty D."/>
            <person name="Scott C."/>
            <person name="Lappas C."/>
            <person name="Markelz B."/>
            <person name="Flanagan C."/>
            <person name="Crowell C."/>
            <person name="Gurson J."/>
            <person name="Lomo C."/>
            <person name="Sear C."/>
            <person name="Strub G."/>
            <person name="Cielo C."/>
            <person name="Slater S."/>
        </authorList>
    </citation>
    <scope>NUCLEOTIDE SEQUENCE [LARGE SCALE GENOMIC DNA]</scope>
    <source>
        <strain>C58 / ATCC 33970</strain>
    </source>
</reference>
<keyword id="KW-0131">Cell cycle</keyword>
<keyword id="KW-0132">Cell division</keyword>
<keyword id="KW-0574">Periplasm</keyword>
<keyword id="KW-1185">Reference proteome</keyword>
<keyword id="KW-0732">Signal</keyword>
<organism>
    <name type="scientific">Agrobacterium fabrum (strain C58 / ATCC 33970)</name>
    <name type="common">Agrobacterium tumefaciens (strain C58)</name>
    <dbReference type="NCBI Taxonomy" id="176299"/>
    <lineage>
        <taxon>Bacteria</taxon>
        <taxon>Pseudomonadati</taxon>
        <taxon>Pseudomonadota</taxon>
        <taxon>Alphaproteobacteria</taxon>
        <taxon>Hyphomicrobiales</taxon>
        <taxon>Rhizobiaceae</taxon>
        <taxon>Rhizobium/Agrobacterium group</taxon>
        <taxon>Agrobacterium</taxon>
        <taxon>Agrobacterium tumefaciens complex</taxon>
    </lineage>
</organism>
<name>TOLB_AGRFC</name>
<evidence type="ECO:0000255" key="1">
    <source>
        <dbReference type="HAMAP-Rule" id="MF_00671"/>
    </source>
</evidence>
<comment type="function">
    <text evidence="1">Part of the Tol-Pal system, which plays a role in outer membrane invagination during cell division and is important for maintaining outer membrane integrity.</text>
</comment>
<comment type="subunit">
    <text evidence="1">The Tol-Pal system is composed of five core proteins: the inner membrane proteins TolA, TolQ and TolR, the periplasmic protein TolB and the outer membrane protein Pal. They form a network linking the inner and outer membranes and the peptidoglycan layer.</text>
</comment>
<comment type="subcellular location">
    <subcellularLocation>
        <location evidence="1">Periplasm</location>
    </subcellularLocation>
</comment>
<comment type="similarity">
    <text evidence="1">Belongs to the TolB family.</text>
</comment>